<comment type="function">
    <text>Agglutinogen that binds to eukaryotic cells; a process mediated by the R-G-D sequence. Pertactin may have a role in bacterial adhesion, and thus play a role in virulence. May contribute to the disease state of whooping cough.</text>
</comment>
<comment type="subunit">
    <text>Monomer.</text>
</comment>
<comment type="subcellular location">
    <molecule>Pertactin autotransporter</molecule>
    <subcellularLocation>
        <location evidence="1">Periplasm</location>
    </subcellularLocation>
</comment>
<comment type="subcellular location">
    <molecule>Outer membrane protein P.70</molecule>
    <subcellularLocation>
        <location>Secreted</location>
    </subcellularLocation>
    <subcellularLocation>
        <location>Cell surface</location>
    </subcellularLocation>
</comment>
<comment type="subcellular location">
    <molecule>Pertactin translocator</molecule>
    <subcellularLocation>
        <location evidence="5">Cell outer membrane</location>
        <topology evidence="5">Multi-pass membrane protein</topology>
    </subcellularLocation>
    <text>The cleaved C-terminal fragment (autotransporter domain) is localized in the outer membrane.</text>
</comment>
<comment type="domain">
    <text evidence="1">The signal peptide, cleaved at the inner membrane, guides the autotransporter protein to the periplasmic space. Then, insertion of the C-terminal translocator domain in the outer membrane forms a hydrophilic pore for the translocation of the passenger domain to the bacterial cell surface, with subsequent cleavage (By similarity).</text>
</comment>
<comment type="miscellaneous">
    <text>Synthesized only in the presence of low Mg(2+) concentrations.</text>
</comment>
<evidence type="ECO:0000250" key="1"/>
<evidence type="ECO:0000255" key="2"/>
<evidence type="ECO:0000255" key="3">
    <source>
        <dbReference type="PROSITE-ProRule" id="PRU00556"/>
    </source>
</evidence>
<evidence type="ECO:0000256" key="4">
    <source>
        <dbReference type="SAM" id="MobiDB-lite"/>
    </source>
</evidence>
<evidence type="ECO:0000305" key="5"/>
<sequence>MNMSLSRIVKAAPLRRTTLAMALGALGAAPAAYADWNNQSIIKAGERQHGIHIKQSDGAGVRTATGTTIKVSGRQAQGVLLENPAAELRFQNGSVTSSGQLFDEGVRRFLGTVTVKAGKLVADHATLANVSDTRDDDGIALYVAGEQAQASIADSTLQGAGGVRVERGANVTVQRSTIVDGGLHIGTLQPLQPEDLPPSRVVLGDTSVTAVPASGAPAAVFVFGANELTVDGGHITGGRAAGVAAMDGAIVHLQRATIRRGDAPAGGAVPGGAVPGGAVPGGFGPLLDGWYGVDVSDSTVDLAQSIVEAPQLGAAIRAGRGARVTVSGGSLSAPHGNVIETGGGARRFPPPASPLSITLQAGARAQGRALLYRVLPEPVKLTLAGGAQGQGDIVATELPPIPGASSGPLDVALASQARWTGATRAVDSLSIDNATWVMTDNSNVGALRLASDGSVDFQQPAEAGRFKVLMVDTLAGSGLFRMNVFADLGLSDKLVVMRDASGQHRLWVRNSGSEPASGNTMLLVQTPRGSAATFTLANKDGKVDIGTYRYRLAANGNGQWSLVGAKAPPAPKPAPQPGPQPGPQPPQPPQPPQPPQPPQPPQRQPEAPAPQPPAGRELSAAANAAVNTGGVGLASTLWYAESNALSKRLGELRLNPDAGGAWGRGFAQRQQLDNRAGRRFDQKVAGFELGADHAVAVAGGRWHLGGLAGYTRGDRGFTGDGGGHTDSVHVGGYATYIANSGFYLDATLRASRLENDFKVAGSDGYAVKGKYRTHGVGVSLEAGRRFAHADGWFLEPQAELAVFRVGGGAYRAANGLRVRDEGGSSVLGRLGLEVGKRIELAGGRQVQPYIKASVLQEFDGAGTVRTNGIAHRTELRGTRAELGLGMAAALGRGHSLYASYEYSKGPKLAMPWTFHAGYRYSW</sequence>
<feature type="signal peptide" evidence="2">
    <location>
        <begin position="1"/>
        <end position="34"/>
    </location>
</feature>
<feature type="chain" id="PRO_0000002708" description="Pertactin autotransporter">
    <location>
        <begin position="35"/>
        <end position="922"/>
    </location>
</feature>
<feature type="chain" id="PRO_0000002709" description="Outer membrane protein P.70">
    <location>
        <begin position="35"/>
        <end position="643"/>
    </location>
</feature>
<feature type="chain" id="PRO_0000002710" description="Pertactin translocator">
    <location>
        <begin position="644"/>
        <end position="922"/>
    </location>
</feature>
<feature type="repeat" description="1">
    <location>
        <begin position="266"/>
        <end position="270"/>
    </location>
</feature>
<feature type="repeat" description="2">
    <location>
        <begin position="271"/>
        <end position="275"/>
    </location>
</feature>
<feature type="repeat" description="3">
    <location>
        <begin position="276"/>
        <end position="280"/>
    </location>
</feature>
<feature type="repeat" description="4; approximate">
    <location>
        <begin position="281"/>
        <end position="285"/>
    </location>
</feature>
<feature type="domain" description="Autotransporter" evidence="3">
    <location>
        <begin position="654"/>
        <end position="922"/>
    </location>
</feature>
<feature type="region of interest" description="4 X 5 AA tandem repeats of G-G-A-V-P">
    <location>
        <begin position="266"/>
        <end position="290"/>
    </location>
</feature>
<feature type="region of interest" description="Disordered" evidence="4">
    <location>
        <begin position="561"/>
        <end position="619"/>
    </location>
</feature>
<feature type="region of interest" description="9 X 3 AA approximate repeats of P-Q-P">
    <location>
        <begin position="575"/>
        <end position="603"/>
    </location>
</feature>
<feature type="short sequence motif" description="Cell attachment site; involved in adhesion to various eukaryotic cell lines">
    <location>
        <begin position="260"/>
        <end position="262"/>
    </location>
</feature>
<feature type="compositionally biased region" description="Pro residues" evidence="4">
    <location>
        <begin position="568"/>
        <end position="613"/>
    </location>
</feature>
<feature type="site" description="Cleavage" evidence="1">
    <location>
        <begin position="643"/>
        <end position="644"/>
    </location>
</feature>
<gene>
    <name type="primary">prn</name>
    <name type="ordered locus">BPP1150</name>
</gene>
<dbReference type="EMBL" id="X54547">
    <property type="protein sequence ID" value="CAA38419.1"/>
    <property type="molecule type" value="Genomic_DNA"/>
</dbReference>
<dbReference type="EMBL" id="BX640426">
    <property type="protein sequence ID" value="CAE36451.1"/>
    <property type="molecule type" value="Genomic_DNA"/>
</dbReference>
<dbReference type="PIR" id="S15204">
    <property type="entry name" value="S15204"/>
</dbReference>
<dbReference type="RefSeq" id="WP_010927881.1">
    <property type="nucleotide sequence ID" value="NC_002928.3"/>
</dbReference>
<dbReference type="SMR" id="P24328"/>
<dbReference type="GeneID" id="93202905"/>
<dbReference type="KEGG" id="bpa:BPP1150"/>
<dbReference type="HOGENOM" id="CLU_002318_1_1_4"/>
<dbReference type="Proteomes" id="UP000001421">
    <property type="component" value="Chromosome"/>
</dbReference>
<dbReference type="GO" id="GO:0009279">
    <property type="term" value="C:cell outer membrane"/>
    <property type="evidence" value="ECO:0007669"/>
    <property type="project" value="UniProtKB-SubCell"/>
</dbReference>
<dbReference type="GO" id="GO:0009986">
    <property type="term" value="C:cell surface"/>
    <property type="evidence" value="ECO:0007669"/>
    <property type="project" value="UniProtKB-SubCell"/>
</dbReference>
<dbReference type="GO" id="GO:0005576">
    <property type="term" value="C:extracellular region"/>
    <property type="evidence" value="ECO:0007669"/>
    <property type="project" value="UniProtKB-SubCell"/>
</dbReference>
<dbReference type="GO" id="GO:0042597">
    <property type="term" value="C:periplasmic space"/>
    <property type="evidence" value="ECO:0007669"/>
    <property type="project" value="UniProtKB-SubCell"/>
</dbReference>
<dbReference type="GO" id="GO:0007155">
    <property type="term" value="P:cell adhesion"/>
    <property type="evidence" value="ECO:0007669"/>
    <property type="project" value="UniProtKB-KW"/>
</dbReference>
<dbReference type="CDD" id="cd01343">
    <property type="entry name" value="PL1_Passenger_AT"/>
    <property type="match status" value="1"/>
</dbReference>
<dbReference type="Gene3D" id="2.160.20.20">
    <property type="match status" value="1"/>
</dbReference>
<dbReference type="Gene3D" id="2.40.128.130">
    <property type="entry name" value="Autotransporter beta-domain"/>
    <property type="match status" value="1"/>
</dbReference>
<dbReference type="InterPro" id="IPR005546">
    <property type="entry name" value="Autotransporte_beta"/>
</dbReference>
<dbReference type="InterPro" id="IPR036709">
    <property type="entry name" value="Autotransporte_beta_dom_sf"/>
</dbReference>
<dbReference type="InterPro" id="IPR051551">
    <property type="entry name" value="Autotransporter_adhesion"/>
</dbReference>
<dbReference type="InterPro" id="IPR012332">
    <property type="entry name" value="Autotransporter_pectin_lyase_C"/>
</dbReference>
<dbReference type="InterPro" id="IPR006315">
    <property type="entry name" value="OM_autotransptr_brl_dom"/>
</dbReference>
<dbReference type="InterPro" id="IPR011050">
    <property type="entry name" value="Pectin_lyase_fold/virulence"/>
</dbReference>
<dbReference type="InterPro" id="IPR003992">
    <property type="entry name" value="Pertactin"/>
</dbReference>
<dbReference type="InterPro" id="IPR004899">
    <property type="entry name" value="Pertactin_central"/>
</dbReference>
<dbReference type="InterPro" id="IPR003991">
    <property type="entry name" value="Pertactin_virulence_factor"/>
</dbReference>
<dbReference type="NCBIfam" id="TIGR01414">
    <property type="entry name" value="autotrans_barl"/>
    <property type="match status" value="1"/>
</dbReference>
<dbReference type="PANTHER" id="PTHR35037">
    <property type="entry name" value="C-TERMINAL REGION OF AIDA-LIKE PROTEIN"/>
    <property type="match status" value="1"/>
</dbReference>
<dbReference type="PANTHER" id="PTHR35037:SF3">
    <property type="entry name" value="C-TERMINAL REGION OF AIDA-LIKE PROTEIN"/>
    <property type="match status" value="1"/>
</dbReference>
<dbReference type="Pfam" id="PF03797">
    <property type="entry name" value="Autotransporter"/>
    <property type="match status" value="1"/>
</dbReference>
<dbReference type="Pfam" id="PF03212">
    <property type="entry name" value="Pertactin"/>
    <property type="match status" value="1"/>
</dbReference>
<dbReference type="PRINTS" id="PR01482">
    <property type="entry name" value="PERTACTIN"/>
</dbReference>
<dbReference type="PRINTS" id="PR01484">
    <property type="entry name" value="PRTACTNFAMLY"/>
</dbReference>
<dbReference type="SMART" id="SM00869">
    <property type="entry name" value="Autotransporter"/>
    <property type="match status" value="1"/>
</dbReference>
<dbReference type="SUPFAM" id="SSF103515">
    <property type="entry name" value="Autotransporter"/>
    <property type="match status" value="1"/>
</dbReference>
<dbReference type="SUPFAM" id="SSF51126">
    <property type="entry name" value="Pectin lyase-like"/>
    <property type="match status" value="1"/>
</dbReference>
<dbReference type="PROSITE" id="PS51208">
    <property type="entry name" value="AUTOTRANSPORTER"/>
    <property type="match status" value="1"/>
</dbReference>
<reference key="1">
    <citation type="journal article" date="1991" name="Mol. Microbiol.">
        <title>P.70 pertactin, an outer-membrane protein from Bordetella parapertussis: cloning, nucleotide sequence and surface expression in Escherichia coli.</title>
        <authorList>
            <person name="Li L.J."/>
            <person name="Dougan G."/>
            <person name="Novotny P."/>
            <person name="Charles I.G."/>
        </authorList>
    </citation>
    <scope>NUCLEOTIDE SEQUENCE [GENOMIC DNA]</scope>
    <source>
        <strain>CN2591</strain>
    </source>
</reference>
<reference key="2">
    <citation type="journal article" date="2003" name="Nat. Genet.">
        <title>Comparative analysis of the genome sequences of Bordetella pertussis, Bordetella parapertussis and Bordetella bronchiseptica.</title>
        <authorList>
            <person name="Parkhill J."/>
            <person name="Sebaihia M."/>
            <person name="Preston A."/>
            <person name="Murphy L.D."/>
            <person name="Thomson N.R."/>
            <person name="Harris D.E."/>
            <person name="Holden M.T.G."/>
            <person name="Churcher C.M."/>
            <person name="Bentley S.D."/>
            <person name="Mungall K.L."/>
            <person name="Cerdeno-Tarraga A.-M."/>
            <person name="Temple L."/>
            <person name="James K.D."/>
            <person name="Harris B."/>
            <person name="Quail M.A."/>
            <person name="Achtman M."/>
            <person name="Atkin R."/>
            <person name="Baker S."/>
            <person name="Basham D."/>
            <person name="Bason N."/>
            <person name="Cherevach I."/>
            <person name="Chillingworth T."/>
            <person name="Collins M."/>
            <person name="Cronin A."/>
            <person name="Davis P."/>
            <person name="Doggett J."/>
            <person name="Feltwell T."/>
            <person name="Goble A."/>
            <person name="Hamlin N."/>
            <person name="Hauser H."/>
            <person name="Holroyd S."/>
            <person name="Jagels K."/>
            <person name="Leather S."/>
            <person name="Moule S."/>
            <person name="Norberczak H."/>
            <person name="O'Neil S."/>
            <person name="Ormond D."/>
            <person name="Price C."/>
            <person name="Rabbinowitsch E."/>
            <person name="Rutter S."/>
            <person name="Sanders M."/>
            <person name="Saunders D."/>
            <person name="Seeger K."/>
            <person name="Sharp S."/>
            <person name="Simmonds M."/>
            <person name="Skelton J."/>
            <person name="Squares R."/>
            <person name="Squares S."/>
            <person name="Stevens K."/>
            <person name="Unwin L."/>
            <person name="Whitehead S."/>
            <person name="Barrell B.G."/>
            <person name="Maskell D.J."/>
        </authorList>
    </citation>
    <scope>NUCLEOTIDE SEQUENCE [LARGE SCALE GENOMIC DNA]</scope>
    <source>
        <strain>12822 / ATCC BAA-587 / NCTC 13253</strain>
    </source>
</reference>
<accession>P24328</accession>
<protein>
    <recommendedName>
        <fullName>Pertactin autotransporter</fullName>
    </recommendedName>
    <alternativeName>
        <fullName>P.95</fullName>
    </alternativeName>
    <component>
        <recommendedName>
            <fullName>Outer membrane protein P.70</fullName>
        </recommendedName>
    </component>
    <component>
        <recommendedName>
            <fullName>Pertactin translocator</fullName>
        </recommendedName>
    </component>
</protein>
<proteinExistence type="inferred from homology"/>
<organism>
    <name type="scientific">Bordetella parapertussis (strain 12822 / ATCC BAA-587 / NCTC 13253)</name>
    <dbReference type="NCBI Taxonomy" id="257311"/>
    <lineage>
        <taxon>Bacteria</taxon>
        <taxon>Pseudomonadati</taxon>
        <taxon>Pseudomonadota</taxon>
        <taxon>Betaproteobacteria</taxon>
        <taxon>Burkholderiales</taxon>
        <taxon>Alcaligenaceae</taxon>
        <taxon>Bordetella</taxon>
    </lineage>
</organism>
<name>PERT_BORPA</name>
<keyword id="KW-0130">Cell adhesion</keyword>
<keyword id="KW-0998">Cell outer membrane</keyword>
<keyword id="KW-0472">Membrane</keyword>
<keyword id="KW-0574">Periplasm</keyword>
<keyword id="KW-0677">Repeat</keyword>
<keyword id="KW-0964">Secreted</keyword>
<keyword id="KW-0732">Signal</keyword>
<keyword id="KW-0812">Transmembrane</keyword>
<keyword id="KW-1134">Transmembrane beta strand</keyword>
<keyword id="KW-0843">Virulence</keyword>